<reference evidence="10" key="1">
    <citation type="journal article" date="1998" name="Science">
        <title>Genome sequence of the nematode C. elegans: a platform for investigating biology.</title>
        <authorList>
            <consortium name="The C. elegans sequencing consortium"/>
        </authorList>
    </citation>
    <scope>NUCLEOTIDE SEQUENCE [LARGE SCALE GENOMIC DNA]</scope>
    <source>
        <strain evidence="10">Bristol N2</strain>
    </source>
</reference>
<reference evidence="9" key="2">
    <citation type="journal article" date="2010" name="EMBO J.">
        <title>Wnt signalling requires MTM-6 and MTM-9 myotubularin lipid-phosphatase function in Wnt-producing cells.</title>
        <authorList>
            <person name="Silhankova M."/>
            <person name="Port F."/>
            <person name="Harterink M."/>
            <person name="Basler K."/>
            <person name="Korswagen H.C."/>
        </authorList>
    </citation>
    <scope>DISRUPTION PHENOTYPE</scope>
</reference>
<evidence type="ECO:0000250" key="1">
    <source>
        <dbReference type="UniProtKB" id="O95248"/>
    </source>
</evidence>
<evidence type="ECO:0000255" key="2"/>
<evidence type="ECO:0000255" key="3">
    <source>
        <dbReference type="PROSITE-ProRule" id="PRU00145"/>
    </source>
</evidence>
<evidence type="ECO:0000255" key="4">
    <source>
        <dbReference type="PROSITE-ProRule" id="PRU00226"/>
    </source>
</evidence>
<evidence type="ECO:0000255" key="5">
    <source>
        <dbReference type="PROSITE-ProRule" id="PRU00304"/>
    </source>
</evidence>
<evidence type="ECO:0000255" key="6">
    <source>
        <dbReference type="PROSITE-ProRule" id="PRU00669"/>
    </source>
</evidence>
<evidence type="ECO:0000256" key="7">
    <source>
        <dbReference type="SAM" id="MobiDB-lite"/>
    </source>
</evidence>
<evidence type="ECO:0000269" key="8">
    <source>
    </source>
</evidence>
<evidence type="ECO:0000305" key="9"/>
<evidence type="ECO:0000312" key="10">
    <source>
        <dbReference type="Proteomes" id="UP000001940"/>
    </source>
</evidence>
<evidence type="ECO:0000312" key="11">
    <source>
        <dbReference type="WormBase" id="H28G03.6"/>
    </source>
</evidence>
<protein>
    <recommendedName>
        <fullName evidence="9">Myotubularin-related protein 5</fullName>
    </recommendedName>
    <alternativeName>
        <fullName evidence="9">Inactive phosphatidylinositol 3-phosphatase 5</fullName>
    </alternativeName>
</protein>
<comment type="function">
    <text evidence="9">Probably acts as an adapter for other myotubularin-like phosphatases (Probable).</text>
</comment>
<comment type="disruption phenotype">
    <text evidence="8">RNAi-mediated knockdown causes no obvious phenotype.</text>
</comment>
<comment type="similarity">
    <text evidence="9">Belongs to the protein-tyrosine phosphatase family. Non-receptor class myotubularin subfamily.</text>
</comment>
<comment type="caution">
    <text evidence="1 9">Although it belongs to the non-receptor class myotubularin subfamily, lacks the conserved active site cysteine residue at position 1284 in the dsPTPase catalytic loop and does not have phosphatase activity (By similarity). The pocket is however sufficiently preserved to bind phosphorylated substrates, and maybe protect them from phosphatases.</text>
</comment>
<keyword id="KW-0479">Metal-binding</keyword>
<keyword id="KW-1185">Reference proteome</keyword>
<keyword id="KW-0862">Zinc</keyword>
<keyword id="KW-0863">Zinc-finger</keyword>
<proteinExistence type="inferred from homology"/>
<sequence>MRDPDKVKSGPICDTVAVIVLEESDDENALPDVLHEVQSPHTSDNIPTSSIKKFARPRGWYNQSVSSPSEFFYQILTTERGTRRIAYVLSTWEEDEKTLNFKAVSIVLISQNFHPKAFKEILLEISNDLRTPEFSSSSELIRFLTYELVEEGSTIEIRTKTLHVELGFELIPISPVTGKDVAMLFKMLGFQNVIKIIHALLSDCRIVLASSSLMRLSRCQNAILSLLYPFEYVHSCVTILPDSLAEVLESPTPFLIGVLSEFVTSFGDENIVVYLDNGEVHVPDHAEIYKSDDYYYNSLHQRLRDVMFTTTSQEDLSIPNEERIEVDDFILDKKLRACFIYYFAELLYGYQYYILYTRIKGNFEKKLTTSLTFHVGAFRGFRKLTDMMSSSLLKSVYFQTFILTRALPRRKHDLFDEISCFKELDQLIFKQNSTSSESKKIIEHISCELIQKERYMEKCSARKQEIFTKIHWISGKELAQNNNSIIHTVKPKMRSNVILQAMLPVVNTHAEYHANQFEAYAHRIEALRNCLAAIFEGKVAFASKSLDAVKSSMRFAPLRIELCRLLNQKCSHDKLTDKQFEDIALLMNAALQAECEEDKDGVVRSLMYLSNVYSRKVAQGMQQYMYTAVQEHKVWKNQRFWTSCFYYEVHEMLFSEMLQKDRKITESLWCHTLRPCAMEMINTDDTDQEELVKQENEMIQAQAKHFANILISLQIPLSEEFFEHEDAHRSVLNEKCKWIVNTLDSILGVTGRINGLSLSRIQTYVEAHVESLRDVYVEMSTGEHLKKGNFDPVLAHGEFLISDPIDCYLLTSIEESEMSLNRLENLLPADGSLFLTNYRVIFKGKSVDINATNGTIVQTIPLYSMESFKKLTNKKLIPTQLIEKGVKIEHIISIRSSCASSIIIAFDEDEINNMAIEKFLEVIETNSHNSFAFYNTRKDMKVVENGSHKFGTLNSAIRGFTKKKTDTRRIRSHSSHRGSIQLSFDKMEELDYLKKNAHIRYAVIDYPRIGLNSKIVKLRMSHSNLDYTICPSYPGNFIVPSETNESELAKVAKGFVEHRLPVVVWMNENGALLVRASAFTSIDMVKKLKKVVNYRRNASKLTGSMTGSQQTLHSKASSNEESSSNIVAGAEIKSAEVQMNYIAKLSNSSQRAVSYALPTQYADKFSTFNDGCTLTQNNANGFPTTRIHRKALYVLLEKGHGVKIPIDSNAEAIMVRSVKESELRRSLQRARQICSSEFQVENRTSFLESWNASNWPQCVSRMIELSNSIVALMNLYNSSVAICLEAGRSITTILSSLSQLLSDPYYRTCDGFQVLVEKEWLAFGHYFHKDTETSSPSFICFLDCVYQISQQYPTAFEFSYFYISFLAYHSTAGYFRTFIDDCEEKRLQSDANEFYLPDNLATINVWEFIKLRNRVSAAFYNELYEQIGDIVIPSSSIPQIHMWPFLAETHLKYGSPYDIEPASHEQQLVDPDYEEEEDWSKLNNTDIDERHLNRRVRSPERDPANMDMIRLLQKSYLTELFDASDRKTTTNGESNGKETIHELTPFTVGARPVQCCYCTNILTRWSKAVHCKKCRIHVHEGCVNRNITIGNITHTWDAKPFEDIKMPSGAIQIGTPQAEKMLHSPNNTLTRESMSPPTANTIPPLCTGYLSKRGAKLKLWVPRFFVLYPDSPKVYYYEDFENWKTAEKPSGCIDLVDFKSFNLEQTGRRGLIELHMKNKTHRLLSENINEAIRWKECIEQVIRD</sequence>
<gene>
    <name evidence="11" type="primary">mtm-5</name>
    <name evidence="11" type="ORF">H28G03.6</name>
</gene>
<name>MTMR5_CAEEL</name>
<organism evidence="10">
    <name type="scientific">Caenorhabditis elegans</name>
    <dbReference type="NCBI Taxonomy" id="6239"/>
    <lineage>
        <taxon>Eukaryota</taxon>
        <taxon>Metazoa</taxon>
        <taxon>Ecdysozoa</taxon>
        <taxon>Nematoda</taxon>
        <taxon>Chromadorea</taxon>
        <taxon>Rhabditida</taxon>
        <taxon>Rhabditina</taxon>
        <taxon>Rhabditomorpha</taxon>
        <taxon>Rhabditoidea</taxon>
        <taxon>Rhabditidae</taxon>
        <taxon>Peloderinae</taxon>
        <taxon>Caenorhabditis</taxon>
    </lineage>
</organism>
<feature type="chain" id="PRO_0000436267" description="Myotubularin-related protein 5" evidence="9">
    <location>
        <begin position="1"/>
        <end position="1744"/>
    </location>
</feature>
<feature type="domain" description="uDENN" evidence="5">
    <location>
        <begin position="14"/>
        <end position="150"/>
    </location>
</feature>
<feature type="domain" description="cDENN" evidence="5">
    <location>
        <begin position="165"/>
        <end position="304"/>
    </location>
</feature>
<feature type="domain" description="dDENN" evidence="5">
    <location>
        <begin position="306"/>
        <end position="412"/>
    </location>
</feature>
<feature type="domain" description="GRAM" evidence="2">
    <location>
        <begin position="787"/>
        <end position="871"/>
    </location>
</feature>
<feature type="domain" description="Myotubularin phosphatase" evidence="6">
    <location>
        <begin position="996"/>
        <end position="1447"/>
    </location>
</feature>
<feature type="domain" description="PH" evidence="3">
    <location>
        <begin position="1643"/>
        <end position="1743"/>
    </location>
</feature>
<feature type="zinc finger region" description="Phorbol-ester/DAG-type" evidence="4">
    <location>
        <begin position="1540"/>
        <end position="1590"/>
    </location>
</feature>
<feature type="region of interest" description="Disordered" evidence="7">
    <location>
        <begin position="1102"/>
        <end position="1123"/>
    </location>
</feature>
<feature type="compositionally biased region" description="Polar residues" evidence="7">
    <location>
        <begin position="1102"/>
        <end position="1116"/>
    </location>
</feature>
<accession>Q9TXP3</accession>
<dbReference type="EMBL" id="BX284606">
    <property type="protein sequence ID" value="CCD72477.1"/>
    <property type="molecule type" value="Genomic_DNA"/>
</dbReference>
<dbReference type="PIR" id="A89531">
    <property type="entry name" value="A89531"/>
</dbReference>
<dbReference type="RefSeq" id="NP_508888.2">
    <property type="nucleotide sequence ID" value="NM_076487.4"/>
</dbReference>
<dbReference type="SMR" id="Q9TXP3"/>
<dbReference type="FunCoup" id="Q9TXP3">
    <property type="interactions" value="2606"/>
</dbReference>
<dbReference type="STRING" id="6239.H28G03.6.1"/>
<dbReference type="PaxDb" id="6239-H28G03.6"/>
<dbReference type="PeptideAtlas" id="Q9TXP3"/>
<dbReference type="EnsemblMetazoa" id="H28G03.6.1">
    <property type="protein sequence ID" value="H28G03.6.1"/>
    <property type="gene ID" value="WBGene00003477"/>
</dbReference>
<dbReference type="GeneID" id="180792"/>
<dbReference type="KEGG" id="cel:CELE_H28G03.6"/>
<dbReference type="UCSC" id="H28G03.6">
    <property type="organism name" value="c. elegans"/>
</dbReference>
<dbReference type="AGR" id="WB:WBGene00003477"/>
<dbReference type="CTD" id="180792"/>
<dbReference type="WormBase" id="H28G03.6">
    <property type="protein sequence ID" value="CE35733"/>
    <property type="gene ID" value="WBGene00003477"/>
    <property type="gene designation" value="mtm-5"/>
</dbReference>
<dbReference type="eggNOG" id="KOG1090">
    <property type="taxonomic scope" value="Eukaryota"/>
</dbReference>
<dbReference type="GeneTree" id="ENSGT00940000168586"/>
<dbReference type="HOGENOM" id="CLU_002298_1_1_1"/>
<dbReference type="InParanoid" id="Q9TXP3"/>
<dbReference type="OMA" id="KITESLW"/>
<dbReference type="OrthoDB" id="74314at2759"/>
<dbReference type="PhylomeDB" id="Q9TXP3"/>
<dbReference type="Reactome" id="R-CEL-1483248">
    <property type="pathway name" value="Synthesis of PIPs at the ER membrane"/>
</dbReference>
<dbReference type="Reactome" id="R-CEL-8876198">
    <property type="pathway name" value="RAB GEFs exchange GTP for GDP on RABs"/>
</dbReference>
<dbReference type="PRO" id="PR:Q9TXP3"/>
<dbReference type="Proteomes" id="UP000001940">
    <property type="component" value="Chromosome X"/>
</dbReference>
<dbReference type="Bgee" id="WBGene00003477">
    <property type="expression patterns" value="Expressed in germ line (C elegans) and 4 other cell types or tissues"/>
</dbReference>
<dbReference type="GO" id="GO:0005737">
    <property type="term" value="C:cytoplasm"/>
    <property type="evidence" value="ECO:0000318"/>
    <property type="project" value="GO_Central"/>
</dbReference>
<dbReference type="GO" id="GO:0016020">
    <property type="term" value="C:membrane"/>
    <property type="evidence" value="ECO:0000318"/>
    <property type="project" value="GO_Central"/>
</dbReference>
<dbReference type="GO" id="GO:0005085">
    <property type="term" value="F:guanyl-nucleotide exchange factor activity"/>
    <property type="evidence" value="ECO:0000318"/>
    <property type="project" value="GO_Central"/>
</dbReference>
<dbReference type="GO" id="GO:0008270">
    <property type="term" value="F:zinc ion binding"/>
    <property type="evidence" value="ECO:0007669"/>
    <property type="project" value="UniProtKB-KW"/>
</dbReference>
<dbReference type="CDD" id="cd00029">
    <property type="entry name" value="C1"/>
    <property type="match status" value="1"/>
</dbReference>
<dbReference type="CDD" id="cd13208">
    <property type="entry name" value="PH-GRAM_MTMR5_MTMR13"/>
    <property type="match status" value="1"/>
</dbReference>
<dbReference type="CDD" id="cd14534">
    <property type="entry name" value="PTP-MTMR5-like"/>
    <property type="match status" value="1"/>
</dbReference>
<dbReference type="Gene3D" id="3.30.450.200">
    <property type="match status" value="1"/>
</dbReference>
<dbReference type="Gene3D" id="3.40.50.11500">
    <property type="match status" value="1"/>
</dbReference>
<dbReference type="Gene3D" id="2.30.29.30">
    <property type="entry name" value="Pleckstrin-homology domain (PH domain)/Phosphotyrosine-binding domain (PTB)"/>
    <property type="match status" value="1"/>
</dbReference>
<dbReference type="InterPro" id="IPR001194">
    <property type="entry name" value="cDENN_dom"/>
</dbReference>
<dbReference type="InterPro" id="IPR005112">
    <property type="entry name" value="dDENN_dom"/>
</dbReference>
<dbReference type="InterPro" id="IPR043153">
    <property type="entry name" value="DENN_C"/>
</dbReference>
<dbReference type="InterPro" id="IPR004182">
    <property type="entry name" value="GRAM"/>
</dbReference>
<dbReference type="InterPro" id="IPR030564">
    <property type="entry name" value="Myotubularin"/>
</dbReference>
<dbReference type="InterPro" id="IPR010569">
    <property type="entry name" value="Myotubularin-like_Pase_dom"/>
</dbReference>
<dbReference type="InterPro" id="IPR002219">
    <property type="entry name" value="PE/DAG-bd"/>
</dbReference>
<dbReference type="InterPro" id="IPR011993">
    <property type="entry name" value="PH-like_dom_sf"/>
</dbReference>
<dbReference type="InterPro" id="IPR001849">
    <property type="entry name" value="PH_domain"/>
</dbReference>
<dbReference type="InterPro" id="IPR029021">
    <property type="entry name" value="Prot-tyrosine_phosphatase-like"/>
</dbReference>
<dbReference type="InterPro" id="IPR022096">
    <property type="entry name" value="SBF1/SBF2"/>
</dbReference>
<dbReference type="InterPro" id="IPR037516">
    <property type="entry name" value="Tripartite_DENN"/>
</dbReference>
<dbReference type="InterPro" id="IPR005113">
    <property type="entry name" value="uDENN_dom"/>
</dbReference>
<dbReference type="PANTHER" id="PTHR10807">
    <property type="entry name" value="MYOTUBULARIN-RELATED"/>
    <property type="match status" value="1"/>
</dbReference>
<dbReference type="PANTHER" id="PTHR10807:SF109">
    <property type="entry name" value="SET DOMAIN BINDING FACTOR, ISOFORM A"/>
    <property type="match status" value="1"/>
</dbReference>
<dbReference type="Pfam" id="PF02141">
    <property type="entry name" value="DENN"/>
    <property type="match status" value="1"/>
</dbReference>
<dbReference type="Pfam" id="PF02893">
    <property type="entry name" value="GRAM"/>
    <property type="match status" value="1"/>
</dbReference>
<dbReference type="Pfam" id="PF06602">
    <property type="entry name" value="Myotub-related"/>
    <property type="match status" value="1"/>
</dbReference>
<dbReference type="Pfam" id="PF00169">
    <property type="entry name" value="PH"/>
    <property type="match status" value="1"/>
</dbReference>
<dbReference type="Pfam" id="PF12335">
    <property type="entry name" value="SBF2"/>
    <property type="match status" value="1"/>
</dbReference>
<dbReference type="SMART" id="SM00801">
    <property type="entry name" value="dDENN"/>
    <property type="match status" value="1"/>
</dbReference>
<dbReference type="SMART" id="SM00799">
    <property type="entry name" value="DENN"/>
    <property type="match status" value="1"/>
</dbReference>
<dbReference type="SMART" id="SM00568">
    <property type="entry name" value="GRAM"/>
    <property type="match status" value="1"/>
</dbReference>
<dbReference type="SMART" id="SM00233">
    <property type="entry name" value="PH"/>
    <property type="match status" value="1"/>
</dbReference>
<dbReference type="SMART" id="SM00800">
    <property type="entry name" value="uDENN"/>
    <property type="match status" value="1"/>
</dbReference>
<dbReference type="SUPFAM" id="SSF52799">
    <property type="entry name" value="(Phosphotyrosine protein) phosphatases II"/>
    <property type="match status" value="1"/>
</dbReference>
<dbReference type="SUPFAM" id="SSF50729">
    <property type="entry name" value="PH domain-like"/>
    <property type="match status" value="1"/>
</dbReference>
<dbReference type="PROSITE" id="PS50211">
    <property type="entry name" value="DENN"/>
    <property type="match status" value="1"/>
</dbReference>
<dbReference type="PROSITE" id="PS50003">
    <property type="entry name" value="PH_DOMAIN"/>
    <property type="match status" value="1"/>
</dbReference>
<dbReference type="PROSITE" id="PS51339">
    <property type="entry name" value="PPASE_MYOTUBULARIN"/>
    <property type="match status" value="1"/>
</dbReference>
<dbReference type="PROSITE" id="PS50081">
    <property type="entry name" value="ZF_DAG_PE_2"/>
    <property type="match status" value="1"/>
</dbReference>